<feature type="initiator methionine" description="Removed" evidence="1">
    <location>
        <position position="1"/>
    </location>
</feature>
<feature type="chain" id="PRO_0000188133" description="ATP synthase epsilon chain">
    <location>
        <begin position="2"/>
        <end position="139"/>
    </location>
</feature>
<keyword id="KW-0066">ATP synthesis</keyword>
<keyword id="KW-0997">Cell inner membrane</keyword>
<keyword id="KW-1003">Cell membrane</keyword>
<keyword id="KW-0139">CF(1)</keyword>
<keyword id="KW-0375">Hydrogen ion transport</keyword>
<keyword id="KW-0406">Ion transport</keyword>
<keyword id="KW-0472">Membrane</keyword>
<keyword id="KW-1185">Reference proteome</keyword>
<keyword id="KW-0813">Transport</keyword>
<reference key="1">
    <citation type="journal article" date="2001" name="Nature">
        <title>Genome sequence of enterohaemorrhagic Escherichia coli O157:H7.</title>
        <authorList>
            <person name="Perna N.T."/>
            <person name="Plunkett G. III"/>
            <person name="Burland V."/>
            <person name="Mau B."/>
            <person name="Glasner J.D."/>
            <person name="Rose D.J."/>
            <person name="Mayhew G.F."/>
            <person name="Evans P.S."/>
            <person name="Gregor J."/>
            <person name="Kirkpatrick H.A."/>
            <person name="Posfai G."/>
            <person name="Hackett J."/>
            <person name="Klink S."/>
            <person name="Boutin A."/>
            <person name="Shao Y."/>
            <person name="Miller L."/>
            <person name="Grotbeck E.J."/>
            <person name="Davis N.W."/>
            <person name="Lim A."/>
            <person name="Dimalanta E.T."/>
            <person name="Potamousis K."/>
            <person name="Apodaca J."/>
            <person name="Anantharaman T.S."/>
            <person name="Lin J."/>
            <person name="Yen G."/>
            <person name="Schwartz D.C."/>
            <person name="Welch R.A."/>
            <person name="Blattner F.R."/>
        </authorList>
    </citation>
    <scope>NUCLEOTIDE SEQUENCE [LARGE SCALE GENOMIC DNA]</scope>
    <source>
        <strain>O157:H7 / EDL933 / ATCC 700927 / EHEC</strain>
    </source>
</reference>
<reference key="2">
    <citation type="journal article" date="2001" name="DNA Res.">
        <title>Complete genome sequence of enterohemorrhagic Escherichia coli O157:H7 and genomic comparison with a laboratory strain K-12.</title>
        <authorList>
            <person name="Hayashi T."/>
            <person name="Makino K."/>
            <person name="Ohnishi M."/>
            <person name="Kurokawa K."/>
            <person name="Ishii K."/>
            <person name="Yokoyama K."/>
            <person name="Han C.-G."/>
            <person name="Ohtsubo E."/>
            <person name="Nakayama K."/>
            <person name="Murata T."/>
            <person name="Tanaka M."/>
            <person name="Tobe T."/>
            <person name="Iida T."/>
            <person name="Takami H."/>
            <person name="Honda T."/>
            <person name="Sasakawa C."/>
            <person name="Ogasawara N."/>
            <person name="Yasunaga T."/>
            <person name="Kuhara S."/>
            <person name="Shiba T."/>
            <person name="Hattori M."/>
            <person name="Shinagawa H."/>
        </authorList>
    </citation>
    <scope>NUCLEOTIDE SEQUENCE [LARGE SCALE GENOMIC DNA]</scope>
    <source>
        <strain>O157:H7 / Sakai / RIMD 0509952 / EHEC</strain>
    </source>
</reference>
<name>ATPE_ECO57</name>
<gene>
    <name type="primary">atpC</name>
    <name type="synonym">papG</name>
    <name type="synonym">uncC</name>
    <name type="ordered locus">Z5229</name>
    <name type="ordered locus">ECs4673</name>
</gene>
<comment type="function">
    <text evidence="1">Produces ATP from ADP in the presence of a proton gradient across the membrane.</text>
</comment>
<comment type="subunit">
    <text>F-type ATPases have 2 components, CF(1) - the catalytic core - and CF(0) - the membrane proton channel. CF(1) has five subunits: alpha(3), beta(3), gamma(1), delta(1), epsilon(1). CF(0) has three main subunits: a, b and c.</text>
</comment>
<comment type="subcellular location">
    <subcellularLocation>
        <location evidence="1">Cell inner membrane</location>
        <topology evidence="1">Peripheral membrane protein</topology>
    </subcellularLocation>
</comment>
<comment type="similarity">
    <text evidence="2">Belongs to the ATPase epsilon chain family.</text>
</comment>
<accession>P58646</accession>
<evidence type="ECO:0000250" key="1"/>
<evidence type="ECO:0000305" key="2"/>
<organism>
    <name type="scientific">Escherichia coli O157:H7</name>
    <dbReference type="NCBI Taxonomy" id="83334"/>
    <lineage>
        <taxon>Bacteria</taxon>
        <taxon>Pseudomonadati</taxon>
        <taxon>Pseudomonadota</taxon>
        <taxon>Gammaproteobacteria</taxon>
        <taxon>Enterobacterales</taxon>
        <taxon>Enterobacteriaceae</taxon>
        <taxon>Escherichia</taxon>
    </lineage>
</organism>
<sequence>MAMTYHLDVVSAEQQMFSGLVEKIQVTGSEGELGIYPGHAPLLTAIKPGMIRIVKQHGHEEFIYLSGGILEVQLGNVTVLADTAIRGQDLDEARAMEAKRKAEEHISSSHGDVDYAQASAELAKAIAQLRVIELTKKAM</sequence>
<protein>
    <recommendedName>
        <fullName>ATP synthase epsilon chain</fullName>
    </recommendedName>
    <alternativeName>
        <fullName>ATP synthase F1 sector epsilon subunit</fullName>
    </alternativeName>
    <alternativeName>
        <fullName>F-ATPase epsilon subunit</fullName>
    </alternativeName>
</protein>
<dbReference type="EMBL" id="AE005174">
    <property type="protein sequence ID" value="AAG58934.1"/>
    <property type="molecule type" value="Genomic_DNA"/>
</dbReference>
<dbReference type="EMBL" id="BA000007">
    <property type="protein sequence ID" value="BAB38096.1"/>
    <property type="molecule type" value="Genomic_DNA"/>
</dbReference>
<dbReference type="PIR" id="A98213">
    <property type="entry name" value="A98213"/>
</dbReference>
<dbReference type="PIR" id="B86059">
    <property type="entry name" value="B86059"/>
</dbReference>
<dbReference type="RefSeq" id="NP_312700.1">
    <property type="nucleotide sequence ID" value="NC_002695.1"/>
</dbReference>
<dbReference type="RefSeq" id="WP_001251961.1">
    <property type="nucleotide sequence ID" value="NZ_SDVX01000004.1"/>
</dbReference>
<dbReference type="SMR" id="P58646"/>
<dbReference type="STRING" id="155864.Z5229"/>
<dbReference type="GeneID" id="915356"/>
<dbReference type="KEGG" id="ece:Z5229"/>
<dbReference type="KEGG" id="ecs:ECs_4673"/>
<dbReference type="PATRIC" id="fig|386585.9.peg.4878"/>
<dbReference type="eggNOG" id="COG0355">
    <property type="taxonomic scope" value="Bacteria"/>
</dbReference>
<dbReference type="HOGENOM" id="CLU_084338_2_0_6"/>
<dbReference type="Proteomes" id="UP000000558">
    <property type="component" value="Chromosome"/>
</dbReference>
<dbReference type="Proteomes" id="UP000002519">
    <property type="component" value="Chromosome"/>
</dbReference>
<dbReference type="GO" id="GO:0005886">
    <property type="term" value="C:plasma membrane"/>
    <property type="evidence" value="ECO:0007669"/>
    <property type="project" value="UniProtKB-SubCell"/>
</dbReference>
<dbReference type="GO" id="GO:0045259">
    <property type="term" value="C:proton-transporting ATP synthase complex"/>
    <property type="evidence" value="ECO:0007669"/>
    <property type="project" value="UniProtKB-KW"/>
</dbReference>
<dbReference type="GO" id="GO:0005524">
    <property type="term" value="F:ATP binding"/>
    <property type="evidence" value="ECO:0007669"/>
    <property type="project" value="UniProtKB-UniRule"/>
</dbReference>
<dbReference type="GO" id="GO:0046933">
    <property type="term" value="F:proton-transporting ATP synthase activity, rotational mechanism"/>
    <property type="evidence" value="ECO:0007669"/>
    <property type="project" value="UniProtKB-UniRule"/>
</dbReference>
<dbReference type="CDD" id="cd12152">
    <property type="entry name" value="F1-ATPase_delta"/>
    <property type="match status" value="1"/>
</dbReference>
<dbReference type="FunFam" id="1.20.5.440:FF:000001">
    <property type="entry name" value="ATP synthase epsilon chain"/>
    <property type="match status" value="1"/>
</dbReference>
<dbReference type="FunFam" id="2.60.15.10:FF:000001">
    <property type="entry name" value="ATP synthase epsilon chain"/>
    <property type="match status" value="1"/>
</dbReference>
<dbReference type="Gene3D" id="1.20.5.440">
    <property type="entry name" value="ATP synthase delta/epsilon subunit, C-terminal domain"/>
    <property type="match status" value="1"/>
</dbReference>
<dbReference type="Gene3D" id="2.60.15.10">
    <property type="entry name" value="F0F1 ATP synthase delta/epsilon subunit, N-terminal"/>
    <property type="match status" value="1"/>
</dbReference>
<dbReference type="HAMAP" id="MF_00530">
    <property type="entry name" value="ATP_synth_epsil_bac"/>
    <property type="match status" value="1"/>
</dbReference>
<dbReference type="InterPro" id="IPR036794">
    <property type="entry name" value="ATP_F1_dsu/esu_C_sf"/>
</dbReference>
<dbReference type="InterPro" id="IPR001469">
    <property type="entry name" value="ATP_synth_F1_dsu/esu"/>
</dbReference>
<dbReference type="InterPro" id="IPR020546">
    <property type="entry name" value="ATP_synth_F1_dsu/esu_N"/>
</dbReference>
<dbReference type="InterPro" id="IPR020547">
    <property type="entry name" value="ATP_synth_F1_esu_C"/>
</dbReference>
<dbReference type="InterPro" id="IPR036771">
    <property type="entry name" value="ATPsynth_dsu/esu_N"/>
</dbReference>
<dbReference type="NCBIfam" id="TIGR01216">
    <property type="entry name" value="ATP_synt_epsi"/>
    <property type="match status" value="1"/>
</dbReference>
<dbReference type="NCBIfam" id="NF001847">
    <property type="entry name" value="PRK00571.1-4"/>
    <property type="match status" value="1"/>
</dbReference>
<dbReference type="PANTHER" id="PTHR13822">
    <property type="entry name" value="ATP SYNTHASE DELTA/EPSILON CHAIN"/>
    <property type="match status" value="1"/>
</dbReference>
<dbReference type="PANTHER" id="PTHR13822:SF10">
    <property type="entry name" value="ATP SYNTHASE EPSILON CHAIN, CHLOROPLASTIC"/>
    <property type="match status" value="1"/>
</dbReference>
<dbReference type="Pfam" id="PF00401">
    <property type="entry name" value="ATP-synt_DE"/>
    <property type="match status" value="1"/>
</dbReference>
<dbReference type="Pfam" id="PF02823">
    <property type="entry name" value="ATP-synt_DE_N"/>
    <property type="match status" value="1"/>
</dbReference>
<dbReference type="SUPFAM" id="SSF46604">
    <property type="entry name" value="Epsilon subunit of F1F0-ATP synthase C-terminal domain"/>
    <property type="match status" value="1"/>
</dbReference>
<dbReference type="SUPFAM" id="SSF51344">
    <property type="entry name" value="Epsilon subunit of F1F0-ATP synthase N-terminal domain"/>
    <property type="match status" value="1"/>
</dbReference>
<proteinExistence type="inferred from homology"/>